<sequence>MQQHDSDSFWGGIVKAMGLVFGDIGTSPIYTLTVVFALTEPTMQNVFGILSLVFWTMTILVTAEYAWLAMRLGRKGEGGAIVLKEILARMIRPGRQLTFVVFLTYLGVSLLMGDGVITPAISILSAVEGMVLIPGLGGLHQSWLILIAAIIAVGLFVFQFKGTDKVAGAFGPIMVVWFASLALSGAVSVASHPTVLFAVSPHYALQFLLDNGLAGFIVLSEVILCATGGEALYADMGHLGRKPIVRAWYIVFWALYLNYLGQGAFIISHPGAKNYLFGMVQHQAPLLYIPFLILTILATIIASQAMISGVFSIVYQGITTRILPLLKVDYTSSHLKSQIYIGSVNWMLMIAVVVIMLVFQKSENLAAAYGLAVTGSMSITGIMMILILSRTTKAWKAVFAALITVVDLVFFTACLHKLPHGGYWSIILASVPFITILVWTKGQRALYRALRPLELDTFELAYEQIYAKGRNIPGTGLFFVKEYNVVPPYVVHCIIRSNIIYERNVFISIVRTDEPFGLVSELKTGIATGLDAFEIHAGYMEHLEIETLLQQHGIKEKVIFYGVEDISTPNPVWKLFATIKRQTPNFVQFNKLPASRLQGVVTRVEM</sequence>
<keyword id="KW-0997">Cell inner membrane</keyword>
<keyword id="KW-1003">Cell membrane</keyword>
<keyword id="KW-0406">Ion transport</keyword>
<keyword id="KW-0472">Membrane</keyword>
<keyword id="KW-0630">Potassium</keyword>
<keyword id="KW-0633">Potassium transport</keyword>
<keyword id="KW-1185">Reference proteome</keyword>
<keyword id="KW-0769">Symport</keyword>
<keyword id="KW-0812">Transmembrane</keyword>
<keyword id="KW-1133">Transmembrane helix</keyword>
<keyword id="KW-0813">Transport</keyword>
<gene>
    <name evidence="1" type="primary">kup</name>
    <name type="ordered locus">Glov_3225</name>
</gene>
<organism>
    <name type="scientific">Trichlorobacter lovleyi (strain ATCC BAA-1151 / DSM 17278 / SZ)</name>
    <name type="common">Geobacter lovleyi</name>
    <dbReference type="NCBI Taxonomy" id="398767"/>
    <lineage>
        <taxon>Bacteria</taxon>
        <taxon>Pseudomonadati</taxon>
        <taxon>Thermodesulfobacteriota</taxon>
        <taxon>Desulfuromonadia</taxon>
        <taxon>Geobacterales</taxon>
        <taxon>Geobacteraceae</taxon>
        <taxon>Trichlorobacter</taxon>
    </lineage>
</organism>
<comment type="function">
    <text evidence="1">Transport of potassium into the cell. Likely operates as a K(+):H(+) symporter.</text>
</comment>
<comment type="catalytic activity">
    <reaction evidence="1">
        <text>K(+)(in) + H(+)(in) = K(+)(out) + H(+)(out)</text>
        <dbReference type="Rhea" id="RHEA:28490"/>
        <dbReference type="ChEBI" id="CHEBI:15378"/>
        <dbReference type="ChEBI" id="CHEBI:29103"/>
    </reaction>
    <physiologicalReaction direction="right-to-left" evidence="1">
        <dbReference type="Rhea" id="RHEA:28492"/>
    </physiologicalReaction>
</comment>
<comment type="subcellular location">
    <subcellularLocation>
        <location evidence="1">Cell inner membrane</location>
        <topology evidence="1">Multi-pass membrane protein</topology>
    </subcellularLocation>
</comment>
<comment type="similarity">
    <text evidence="1">Belongs to the HAK/KUP transporter (TC 2.A.72) family.</text>
</comment>
<proteinExistence type="inferred from homology"/>
<reference key="1">
    <citation type="submission" date="2008-05" db="EMBL/GenBank/DDBJ databases">
        <title>Complete sequence of chromosome of Geobacter lovleyi SZ.</title>
        <authorList>
            <consortium name="US DOE Joint Genome Institute"/>
            <person name="Lucas S."/>
            <person name="Copeland A."/>
            <person name="Lapidus A."/>
            <person name="Glavina del Rio T."/>
            <person name="Dalin E."/>
            <person name="Tice H."/>
            <person name="Bruce D."/>
            <person name="Goodwin L."/>
            <person name="Pitluck S."/>
            <person name="Chertkov O."/>
            <person name="Meincke L."/>
            <person name="Brettin T."/>
            <person name="Detter J.C."/>
            <person name="Han C."/>
            <person name="Tapia R."/>
            <person name="Kuske C.R."/>
            <person name="Schmutz J."/>
            <person name="Larimer F."/>
            <person name="Land M."/>
            <person name="Hauser L."/>
            <person name="Kyrpides N."/>
            <person name="Mikhailova N."/>
            <person name="Sung Y."/>
            <person name="Fletcher K.E."/>
            <person name="Ritalahti K.M."/>
            <person name="Loeffler F.E."/>
            <person name="Richardson P."/>
        </authorList>
    </citation>
    <scope>NUCLEOTIDE SEQUENCE [LARGE SCALE GENOMIC DNA]</scope>
    <source>
        <strain>ATCC BAA-1151 / DSM 17278 / SZ</strain>
    </source>
</reference>
<name>KUP_TRIL1</name>
<dbReference type="EMBL" id="CP001089">
    <property type="protein sequence ID" value="ACD96931.1"/>
    <property type="molecule type" value="Genomic_DNA"/>
</dbReference>
<dbReference type="RefSeq" id="WP_012471255.1">
    <property type="nucleotide sequence ID" value="NC_010814.1"/>
</dbReference>
<dbReference type="STRING" id="398767.Glov_3225"/>
<dbReference type="KEGG" id="glo:Glov_3225"/>
<dbReference type="eggNOG" id="COG3158">
    <property type="taxonomic scope" value="Bacteria"/>
</dbReference>
<dbReference type="HOGENOM" id="CLU_008142_4_2_7"/>
<dbReference type="OrthoDB" id="9805577at2"/>
<dbReference type="Proteomes" id="UP000002420">
    <property type="component" value="Chromosome"/>
</dbReference>
<dbReference type="GO" id="GO:0005886">
    <property type="term" value="C:plasma membrane"/>
    <property type="evidence" value="ECO:0007669"/>
    <property type="project" value="UniProtKB-SubCell"/>
</dbReference>
<dbReference type="GO" id="GO:0015079">
    <property type="term" value="F:potassium ion transmembrane transporter activity"/>
    <property type="evidence" value="ECO:0007669"/>
    <property type="project" value="UniProtKB-UniRule"/>
</dbReference>
<dbReference type="GO" id="GO:0015293">
    <property type="term" value="F:symporter activity"/>
    <property type="evidence" value="ECO:0007669"/>
    <property type="project" value="UniProtKB-UniRule"/>
</dbReference>
<dbReference type="HAMAP" id="MF_01522">
    <property type="entry name" value="Kup"/>
    <property type="match status" value="1"/>
</dbReference>
<dbReference type="InterPro" id="IPR003855">
    <property type="entry name" value="K+_transporter"/>
</dbReference>
<dbReference type="InterPro" id="IPR053952">
    <property type="entry name" value="K_trans_C"/>
</dbReference>
<dbReference type="InterPro" id="IPR053951">
    <property type="entry name" value="K_trans_N"/>
</dbReference>
<dbReference type="InterPro" id="IPR023051">
    <property type="entry name" value="Kup"/>
</dbReference>
<dbReference type="PANTHER" id="PTHR30540:SF83">
    <property type="entry name" value="K+ POTASSIUM TRANSPORTER"/>
    <property type="match status" value="1"/>
</dbReference>
<dbReference type="PANTHER" id="PTHR30540">
    <property type="entry name" value="OSMOTIC STRESS POTASSIUM TRANSPORTER"/>
    <property type="match status" value="1"/>
</dbReference>
<dbReference type="Pfam" id="PF02705">
    <property type="entry name" value="K_trans"/>
    <property type="match status" value="1"/>
</dbReference>
<dbReference type="Pfam" id="PF22776">
    <property type="entry name" value="K_trans_C"/>
    <property type="match status" value="1"/>
</dbReference>
<evidence type="ECO:0000255" key="1">
    <source>
        <dbReference type="HAMAP-Rule" id="MF_01522"/>
    </source>
</evidence>
<accession>B3EAP8</accession>
<feature type="chain" id="PRO_1000190271" description="Probable potassium transport system protein Kup">
    <location>
        <begin position="1"/>
        <end position="606"/>
    </location>
</feature>
<feature type="transmembrane region" description="Helical" evidence="1">
    <location>
        <begin position="18"/>
        <end position="38"/>
    </location>
</feature>
<feature type="transmembrane region" description="Helical" evidence="1">
    <location>
        <begin position="46"/>
        <end position="66"/>
    </location>
</feature>
<feature type="transmembrane region" description="Helical" evidence="1">
    <location>
        <begin position="97"/>
        <end position="117"/>
    </location>
</feature>
<feature type="transmembrane region" description="Helical" evidence="1">
    <location>
        <begin position="138"/>
        <end position="158"/>
    </location>
</feature>
<feature type="transmembrane region" description="Helical" evidence="1">
    <location>
        <begin position="166"/>
        <end position="186"/>
    </location>
</feature>
<feature type="transmembrane region" description="Helical" evidence="1">
    <location>
        <begin position="212"/>
        <end position="232"/>
    </location>
</feature>
<feature type="transmembrane region" description="Helical" evidence="1">
    <location>
        <begin position="247"/>
        <end position="267"/>
    </location>
</feature>
<feature type="transmembrane region" description="Helical" evidence="1">
    <location>
        <begin position="287"/>
        <end position="307"/>
    </location>
</feature>
<feature type="transmembrane region" description="Helical" evidence="1">
    <location>
        <begin position="339"/>
        <end position="359"/>
    </location>
</feature>
<feature type="transmembrane region" description="Helical" evidence="1">
    <location>
        <begin position="368"/>
        <end position="388"/>
    </location>
</feature>
<feature type="transmembrane region" description="Helical" evidence="1">
    <location>
        <begin position="395"/>
        <end position="415"/>
    </location>
</feature>
<feature type="transmembrane region" description="Helical" evidence="1">
    <location>
        <begin position="418"/>
        <end position="438"/>
    </location>
</feature>
<protein>
    <recommendedName>
        <fullName evidence="1">Probable potassium transport system protein Kup</fullName>
    </recommendedName>
</protein>